<dbReference type="EC" id="4.2.3.4" evidence="1"/>
<dbReference type="EMBL" id="CP000891">
    <property type="protein sequence ID" value="ABX51359.1"/>
    <property type="molecule type" value="Genomic_DNA"/>
</dbReference>
<dbReference type="RefSeq" id="WP_006084509.1">
    <property type="nucleotide sequence ID" value="NC_009997.1"/>
</dbReference>
<dbReference type="SMR" id="A9L694"/>
<dbReference type="GeneID" id="11774188"/>
<dbReference type="KEGG" id="sbn:Sbal195_4201"/>
<dbReference type="HOGENOM" id="CLU_001201_0_2_6"/>
<dbReference type="UniPathway" id="UPA00053">
    <property type="reaction ID" value="UER00085"/>
</dbReference>
<dbReference type="Proteomes" id="UP000000770">
    <property type="component" value="Chromosome"/>
</dbReference>
<dbReference type="GO" id="GO:0005737">
    <property type="term" value="C:cytoplasm"/>
    <property type="evidence" value="ECO:0007669"/>
    <property type="project" value="UniProtKB-SubCell"/>
</dbReference>
<dbReference type="GO" id="GO:0003856">
    <property type="term" value="F:3-dehydroquinate synthase activity"/>
    <property type="evidence" value="ECO:0007669"/>
    <property type="project" value="UniProtKB-UniRule"/>
</dbReference>
<dbReference type="GO" id="GO:0046872">
    <property type="term" value="F:metal ion binding"/>
    <property type="evidence" value="ECO:0007669"/>
    <property type="project" value="UniProtKB-KW"/>
</dbReference>
<dbReference type="GO" id="GO:0000166">
    <property type="term" value="F:nucleotide binding"/>
    <property type="evidence" value="ECO:0007669"/>
    <property type="project" value="UniProtKB-KW"/>
</dbReference>
<dbReference type="GO" id="GO:0008652">
    <property type="term" value="P:amino acid biosynthetic process"/>
    <property type="evidence" value="ECO:0007669"/>
    <property type="project" value="UniProtKB-KW"/>
</dbReference>
<dbReference type="GO" id="GO:0009073">
    <property type="term" value="P:aromatic amino acid family biosynthetic process"/>
    <property type="evidence" value="ECO:0007669"/>
    <property type="project" value="UniProtKB-KW"/>
</dbReference>
<dbReference type="GO" id="GO:0009423">
    <property type="term" value="P:chorismate biosynthetic process"/>
    <property type="evidence" value="ECO:0007669"/>
    <property type="project" value="UniProtKB-UniRule"/>
</dbReference>
<dbReference type="CDD" id="cd08195">
    <property type="entry name" value="DHQS"/>
    <property type="match status" value="1"/>
</dbReference>
<dbReference type="FunFam" id="1.20.1090.10:FF:000002">
    <property type="entry name" value="3-dehydroquinate synthase"/>
    <property type="match status" value="1"/>
</dbReference>
<dbReference type="FunFam" id="3.40.50.1970:FF:000001">
    <property type="entry name" value="3-dehydroquinate synthase"/>
    <property type="match status" value="1"/>
</dbReference>
<dbReference type="Gene3D" id="3.40.50.1970">
    <property type="match status" value="1"/>
</dbReference>
<dbReference type="Gene3D" id="1.20.1090.10">
    <property type="entry name" value="Dehydroquinate synthase-like - alpha domain"/>
    <property type="match status" value="1"/>
</dbReference>
<dbReference type="HAMAP" id="MF_00110">
    <property type="entry name" value="DHQ_synthase"/>
    <property type="match status" value="1"/>
</dbReference>
<dbReference type="InterPro" id="IPR050071">
    <property type="entry name" value="Dehydroquinate_synthase"/>
</dbReference>
<dbReference type="InterPro" id="IPR016037">
    <property type="entry name" value="DHQ_synth_AroB"/>
</dbReference>
<dbReference type="InterPro" id="IPR030963">
    <property type="entry name" value="DHQ_synth_fam"/>
</dbReference>
<dbReference type="InterPro" id="IPR030960">
    <property type="entry name" value="DHQS/DOIS_N"/>
</dbReference>
<dbReference type="InterPro" id="IPR056179">
    <property type="entry name" value="DHQS_C"/>
</dbReference>
<dbReference type="NCBIfam" id="TIGR01357">
    <property type="entry name" value="aroB"/>
    <property type="match status" value="1"/>
</dbReference>
<dbReference type="PANTHER" id="PTHR43622">
    <property type="entry name" value="3-DEHYDROQUINATE SYNTHASE"/>
    <property type="match status" value="1"/>
</dbReference>
<dbReference type="PANTHER" id="PTHR43622:SF7">
    <property type="entry name" value="3-DEHYDROQUINATE SYNTHASE, CHLOROPLASTIC"/>
    <property type="match status" value="1"/>
</dbReference>
<dbReference type="Pfam" id="PF01761">
    <property type="entry name" value="DHQ_synthase"/>
    <property type="match status" value="1"/>
</dbReference>
<dbReference type="Pfam" id="PF24621">
    <property type="entry name" value="DHQS_C"/>
    <property type="match status" value="1"/>
</dbReference>
<dbReference type="PIRSF" id="PIRSF001455">
    <property type="entry name" value="DHQ_synth"/>
    <property type="match status" value="1"/>
</dbReference>
<dbReference type="SUPFAM" id="SSF56796">
    <property type="entry name" value="Dehydroquinate synthase-like"/>
    <property type="match status" value="1"/>
</dbReference>
<accession>A9L694</accession>
<keyword id="KW-0028">Amino-acid biosynthesis</keyword>
<keyword id="KW-0057">Aromatic amino acid biosynthesis</keyword>
<keyword id="KW-0170">Cobalt</keyword>
<keyword id="KW-0963">Cytoplasm</keyword>
<keyword id="KW-0456">Lyase</keyword>
<keyword id="KW-0479">Metal-binding</keyword>
<keyword id="KW-0520">NAD</keyword>
<keyword id="KW-0547">Nucleotide-binding</keyword>
<keyword id="KW-0862">Zinc</keyword>
<evidence type="ECO:0000255" key="1">
    <source>
        <dbReference type="HAMAP-Rule" id="MF_00110"/>
    </source>
</evidence>
<comment type="function">
    <text evidence="1">Catalyzes the conversion of 3-deoxy-D-arabino-heptulosonate 7-phosphate (DAHP) to dehydroquinate (DHQ).</text>
</comment>
<comment type="catalytic activity">
    <reaction evidence="1">
        <text>7-phospho-2-dehydro-3-deoxy-D-arabino-heptonate = 3-dehydroquinate + phosphate</text>
        <dbReference type="Rhea" id="RHEA:21968"/>
        <dbReference type="ChEBI" id="CHEBI:32364"/>
        <dbReference type="ChEBI" id="CHEBI:43474"/>
        <dbReference type="ChEBI" id="CHEBI:58394"/>
        <dbReference type="EC" id="4.2.3.4"/>
    </reaction>
</comment>
<comment type="cofactor">
    <cofactor evidence="1">
        <name>Co(2+)</name>
        <dbReference type="ChEBI" id="CHEBI:48828"/>
    </cofactor>
    <cofactor evidence="1">
        <name>Zn(2+)</name>
        <dbReference type="ChEBI" id="CHEBI:29105"/>
    </cofactor>
    <text evidence="1">Binds 1 divalent metal cation per subunit. Can use either Co(2+) or Zn(2+).</text>
</comment>
<comment type="cofactor">
    <cofactor evidence="1">
        <name>NAD(+)</name>
        <dbReference type="ChEBI" id="CHEBI:57540"/>
    </cofactor>
</comment>
<comment type="pathway">
    <text evidence="1">Metabolic intermediate biosynthesis; chorismate biosynthesis; chorismate from D-erythrose 4-phosphate and phosphoenolpyruvate: step 2/7.</text>
</comment>
<comment type="subcellular location">
    <subcellularLocation>
        <location evidence="1">Cytoplasm</location>
    </subcellularLocation>
</comment>
<comment type="similarity">
    <text evidence="1">Belongs to the sugar phosphate cyclases superfamily. Dehydroquinate synthase family.</text>
</comment>
<organism>
    <name type="scientific">Shewanella baltica (strain OS195)</name>
    <dbReference type="NCBI Taxonomy" id="399599"/>
    <lineage>
        <taxon>Bacteria</taxon>
        <taxon>Pseudomonadati</taxon>
        <taxon>Pseudomonadota</taxon>
        <taxon>Gammaproteobacteria</taxon>
        <taxon>Alteromonadales</taxon>
        <taxon>Shewanellaceae</taxon>
        <taxon>Shewanella</taxon>
    </lineage>
</organism>
<proteinExistence type="inferred from homology"/>
<name>AROB_SHEB9</name>
<feature type="chain" id="PRO_1000094608" description="3-dehydroquinate synthase">
    <location>
        <begin position="1"/>
        <end position="358"/>
    </location>
</feature>
<feature type="binding site" evidence="1">
    <location>
        <begin position="70"/>
        <end position="75"/>
    </location>
    <ligand>
        <name>NAD(+)</name>
        <dbReference type="ChEBI" id="CHEBI:57540"/>
    </ligand>
</feature>
<feature type="binding site" evidence="1">
    <location>
        <begin position="104"/>
        <end position="108"/>
    </location>
    <ligand>
        <name>NAD(+)</name>
        <dbReference type="ChEBI" id="CHEBI:57540"/>
    </ligand>
</feature>
<feature type="binding site" evidence="1">
    <location>
        <begin position="128"/>
        <end position="129"/>
    </location>
    <ligand>
        <name>NAD(+)</name>
        <dbReference type="ChEBI" id="CHEBI:57540"/>
    </ligand>
</feature>
<feature type="binding site" evidence="1">
    <location>
        <position position="141"/>
    </location>
    <ligand>
        <name>NAD(+)</name>
        <dbReference type="ChEBI" id="CHEBI:57540"/>
    </ligand>
</feature>
<feature type="binding site" evidence="1">
    <location>
        <position position="150"/>
    </location>
    <ligand>
        <name>NAD(+)</name>
        <dbReference type="ChEBI" id="CHEBI:57540"/>
    </ligand>
</feature>
<feature type="binding site" evidence="1">
    <location>
        <begin position="168"/>
        <end position="171"/>
    </location>
    <ligand>
        <name>NAD(+)</name>
        <dbReference type="ChEBI" id="CHEBI:57540"/>
    </ligand>
</feature>
<feature type="binding site" evidence="1">
    <location>
        <position position="183"/>
    </location>
    <ligand>
        <name>Zn(2+)</name>
        <dbReference type="ChEBI" id="CHEBI:29105"/>
    </ligand>
</feature>
<feature type="binding site" evidence="1">
    <location>
        <position position="246"/>
    </location>
    <ligand>
        <name>Zn(2+)</name>
        <dbReference type="ChEBI" id="CHEBI:29105"/>
    </ligand>
</feature>
<feature type="binding site" evidence="1">
    <location>
        <position position="263"/>
    </location>
    <ligand>
        <name>Zn(2+)</name>
        <dbReference type="ChEBI" id="CHEBI:29105"/>
    </ligand>
</feature>
<sequence length="358" mass="39189">MKQIQVDLGVRSYPIYIGQNLMSDGETLSRYLLKKRILIVTNETVAPLYLKQIQETMASFGEVESVILPDGEQFKDLAHLDTIFTALLQQNYGRDSVLVALGGGVIGDMTGFAAACYQRGIDFIQIPTTLLSQVDSSVGGKTAVNHPLGKNMIGAFYQPQIVLIDTLCLHTLPAREFAAGMAEVIKYGIMWDADFFQWLEDNVTALKTLDAQALVYAISRCCEIKADVVSQDETEQGVRALLNLGHTFGHAIEAEMGYGNWLHGEAVSAGTVLAAQTAKALGLIDESIVCRIIQLLQAFDLPVSAPESMDFDSFIQHMRRDKKVLGGQIRLVLPTAIGRADVFSQVTESTLEQVIRCA</sequence>
<gene>
    <name evidence="1" type="primary">aroB</name>
    <name type="ordered locus">Sbal195_4201</name>
</gene>
<reference key="1">
    <citation type="submission" date="2007-11" db="EMBL/GenBank/DDBJ databases">
        <title>Complete sequence of chromosome of Shewanella baltica OS195.</title>
        <authorList>
            <consortium name="US DOE Joint Genome Institute"/>
            <person name="Copeland A."/>
            <person name="Lucas S."/>
            <person name="Lapidus A."/>
            <person name="Barry K."/>
            <person name="Glavina del Rio T."/>
            <person name="Dalin E."/>
            <person name="Tice H."/>
            <person name="Pitluck S."/>
            <person name="Chain P."/>
            <person name="Malfatti S."/>
            <person name="Shin M."/>
            <person name="Vergez L."/>
            <person name="Schmutz J."/>
            <person name="Larimer F."/>
            <person name="Land M."/>
            <person name="Hauser L."/>
            <person name="Kyrpides N."/>
            <person name="Kim E."/>
            <person name="Brettar I."/>
            <person name="Rodrigues J."/>
            <person name="Konstantinidis K."/>
            <person name="Klappenbach J."/>
            <person name="Hofle M."/>
            <person name="Tiedje J."/>
            <person name="Richardson P."/>
        </authorList>
    </citation>
    <scope>NUCLEOTIDE SEQUENCE [LARGE SCALE GENOMIC DNA]</scope>
    <source>
        <strain>OS195</strain>
    </source>
</reference>
<protein>
    <recommendedName>
        <fullName evidence="1">3-dehydroquinate synthase</fullName>
        <shortName evidence="1">DHQS</shortName>
        <ecNumber evidence="1">4.2.3.4</ecNumber>
    </recommendedName>
</protein>